<proteinExistence type="evidence at protein level"/>
<gene>
    <name evidence="5" type="primary">milC</name>
    <name type="ORF">CCM_09344</name>
</gene>
<keyword id="KW-0349">Heme</keyword>
<keyword id="KW-0408">Iron</keyword>
<keyword id="KW-0472">Membrane</keyword>
<keyword id="KW-0479">Metal-binding</keyword>
<keyword id="KW-0503">Monooxygenase</keyword>
<keyword id="KW-0560">Oxidoreductase</keyword>
<keyword id="KW-1185">Reference proteome</keyword>
<keyword id="KW-0812">Transmembrane</keyword>
<keyword id="KW-1133">Transmembrane helix</keyword>
<name>MILC_CORMM</name>
<feature type="chain" id="PRO_0000455747" description="Cytochrome P450 monooxygenase milC">
    <location>
        <begin position="1"/>
        <end position="526"/>
    </location>
</feature>
<feature type="transmembrane region" description="Helical" evidence="2">
    <location>
        <begin position="2"/>
        <end position="20"/>
    </location>
</feature>
<feature type="binding site" description="axial binding residue" evidence="1">
    <location>
        <position position="470"/>
    </location>
    <ligand>
        <name>heme</name>
        <dbReference type="ChEBI" id="CHEBI:30413"/>
    </ligand>
    <ligandPart>
        <name>Fe</name>
        <dbReference type="ChEBI" id="CHEBI:18248"/>
    </ligandPart>
</feature>
<protein>
    <recommendedName>
        <fullName evidence="5">Cytochrome P450 monooxygenase milC</fullName>
        <ecNumber evidence="4">1.-.-.-</ecNumber>
    </recommendedName>
    <alternativeName>
        <fullName evidence="5">Cordypyrones biosynthesis cluster protein C</fullName>
    </alternativeName>
</protein>
<sequence>MAIHAAYIFIAATLIALYVARRMREQHARQKLARDQGCEPLTTAINKLPYGLDRKWQIVTHRGNILDDLITTRFAELGCYIYTDNQWGSPPIICAEPATMKAVLSTKFRDWDMDSNRYPALGPWLGRGVLVSSHQGKGSLWATARALLRPMFANTATYNHALIEPSVQEFLSILGHLNQAGAPDKDLLPFIRRLNVDIITTVFCGGSINEQQSGLAIAVGADAKHRKPVLEEAFDTIEPIAGLRLQTGSMYWLFTSKPFRDGCETFTGLADGWINRALSKRDEKPDLSQDEGAAAREKNFTEELVSSTDDRELLRDILVQLLFAGIDTSTSMLSFALVELGRHPSAWARLRAELAAHNMLSGGPETITAAQLKECAFLQNIIKETLRLYPPVPINSREAIRDTVLPSGGGADGSKPVFVPKGTSLKYSPYVMHRREDLYGPDALLWNPDRWIGRAPGWDYLPFNGGPRVCIGQKFALSSSAYVLARLAQQFDTCTALPTTGPIDSKLGAVLVPKAGVPVSLTNSTT</sequence>
<accession>G3JUI6</accession>
<evidence type="ECO:0000250" key="1">
    <source>
        <dbReference type="UniProtKB" id="P04798"/>
    </source>
</evidence>
<evidence type="ECO:0000255" key="2"/>
<evidence type="ECO:0000269" key="3">
    <source>
    </source>
</evidence>
<evidence type="ECO:0000269" key="4">
    <source>
    </source>
</evidence>
<evidence type="ECO:0000303" key="5">
    <source>
    </source>
</evidence>
<evidence type="ECO:0000305" key="6"/>
<comment type="function">
    <text evidence="4">Cytochrome P450 monooxygenase; part of the gene cluster that mediates the biosynthesis of cordypyrones A and B, 2 pyrones that show modest activities against pathogenic bacteria including methicillin-resistant Staphylococcus aureus (MRSA), Mycobacterium tuberculosis and Bacillus cereus (PubMed:34548637). The HR-PKS milA catalyzes the formation of cordypyrones A via condensation of one acetate with 10 malonate units (PubMed:34548637). Since milA lacks an enoyl reductase domain, the 2 beta-keto processing domains DH and KR of milA collaborate with the trans-enoyl reductase milB to catalyze the different levels of reduction (PubMed:34548637). The cytochrome P450 monooxygenase milC then hydroxylates the C-22 of cordypyrones A to yield cordypyrones B (PubMed:34548637).</text>
</comment>
<comment type="catalytic activity">
    <reaction evidence="4">
        <text>cordypyrone A + reduced [NADPH--hemoprotein reductase] + O2 = cordypyrone B + oxidized [NADPH--hemoprotein reductase] + H2O + H(+)</text>
        <dbReference type="Rhea" id="RHEA:71079"/>
        <dbReference type="Rhea" id="RHEA-COMP:11964"/>
        <dbReference type="Rhea" id="RHEA-COMP:11965"/>
        <dbReference type="ChEBI" id="CHEBI:15377"/>
        <dbReference type="ChEBI" id="CHEBI:15378"/>
        <dbReference type="ChEBI" id="CHEBI:15379"/>
        <dbReference type="ChEBI" id="CHEBI:57618"/>
        <dbReference type="ChEBI" id="CHEBI:58210"/>
        <dbReference type="ChEBI" id="CHEBI:190187"/>
        <dbReference type="ChEBI" id="CHEBI:190188"/>
    </reaction>
    <physiologicalReaction direction="left-to-right" evidence="4">
        <dbReference type="Rhea" id="RHEA:71080"/>
    </physiologicalReaction>
</comment>
<comment type="cofactor">
    <cofactor evidence="1">
        <name>heme</name>
        <dbReference type="ChEBI" id="CHEBI:30413"/>
    </cofactor>
</comment>
<comment type="pathway">
    <text evidence="3">Secondary metabolite biosynthesis.</text>
</comment>
<comment type="subcellular location">
    <subcellularLocation>
        <location evidence="2">Membrane</location>
        <topology evidence="2">Single-pass membrane protein</topology>
    </subcellularLocation>
</comment>
<comment type="similarity">
    <text evidence="6">Belongs to the cytochrome P450 family.</text>
</comment>
<reference key="1">
    <citation type="journal article" date="2011" name="Genome Biol.">
        <title>Genome sequence of the insect pathogenic fungus Cordyceps militaris, a valued traditional Chinese medicine.</title>
        <authorList>
            <person name="Zheng P."/>
            <person name="Xia Y."/>
            <person name="Xiao G."/>
            <person name="Xiong C."/>
            <person name="Hu X."/>
            <person name="Zhang S."/>
            <person name="Zheng H."/>
            <person name="Huang Y."/>
            <person name="Zhou Y."/>
            <person name="Wang S."/>
            <person name="Zhao G.-P."/>
            <person name="Liu X."/>
            <person name="St Leger R.J."/>
            <person name="Wang C."/>
        </authorList>
    </citation>
    <scope>NUCLEOTIDE SEQUENCE [LARGE SCALE GENOMIC DNA]</scope>
    <source>
        <strain>CM01</strain>
    </source>
</reference>
<reference key="2">
    <citation type="journal article" date="2022" name="J. Antibiot.">
        <title>Heterologous expression of a natural product biosynthetic gene cluster from Cordyceps militaris.</title>
        <authorList>
            <person name="Gao Y.L."/>
            <person name="Yu C."/>
            <person name="Li L."/>
        </authorList>
    </citation>
    <scope>FUNCTION</scope>
    <scope>CATALYTIC ACTIVITY</scope>
    <scope>PATHWAY</scope>
</reference>
<organism>
    <name type="scientific">Cordyceps militaris (strain CM01)</name>
    <name type="common">Caterpillar fungus</name>
    <dbReference type="NCBI Taxonomy" id="983644"/>
    <lineage>
        <taxon>Eukaryota</taxon>
        <taxon>Fungi</taxon>
        <taxon>Dikarya</taxon>
        <taxon>Ascomycota</taxon>
        <taxon>Pezizomycotina</taxon>
        <taxon>Sordariomycetes</taxon>
        <taxon>Hypocreomycetidae</taxon>
        <taxon>Hypocreales</taxon>
        <taxon>Cordycipitaceae</taxon>
        <taxon>Cordyceps</taxon>
    </lineage>
</organism>
<dbReference type="EC" id="1.-.-.-" evidence="4"/>
<dbReference type="EMBL" id="JH126407">
    <property type="protein sequence ID" value="EGX87722.1"/>
    <property type="molecule type" value="Genomic_DNA"/>
</dbReference>
<dbReference type="RefSeq" id="XP_006674541.1">
    <property type="nucleotide sequence ID" value="XM_006674478.1"/>
</dbReference>
<dbReference type="SMR" id="G3JUI6"/>
<dbReference type="STRING" id="983644.G3JUI6"/>
<dbReference type="GeneID" id="18171347"/>
<dbReference type="KEGG" id="cmt:CCM_09344"/>
<dbReference type="VEuPathDB" id="FungiDB:CCM_09344"/>
<dbReference type="eggNOG" id="KOG0157">
    <property type="taxonomic scope" value="Eukaryota"/>
</dbReference>
<dbReference type="HOGENOM" id="CLU_001570_27_0_1"/>
<dbReference type="InParanoid" id="G3JUI6"/>
<dbReference type="OMA" id="WQIVTHR"/>
<dbReference type="OrthoDB" id="1470350at2759"/>
<dbReference type="Proteomes" id="UP000001610">
    <property type="component" value="Unassembled WGS sequence"/>
</dbReference>
<dbReference type="GO" id="GO:0016020">
    <property type="term" value="C:membrane"/>
    <property type="evidence" value="ECO:0007669"/>
    <property type="project" value="UniProtKB-SubCell"/>
</dbReference>
<dbReference type="GO" id="GO:0020037">
    <property type="term" value="F:heme binding"/>
    <property type="evidence" value="ECO:0007669"/>
    <property type="project" value="InterPro"/>
</dbReference>
<dbReference type="GO" id="GO:0005506">
    <property type="term" value="F:iron ion binding"/>
    <property type="evidence" value="ECO:0007669"/>
    <property type="project" value="InterPro"/>
</dbReference>
<dbReference type="GO" id="GO:0004497">
    <property type="term" value="F:monooxygenase activity"/>
    <property type="evidence" value="ECO:0007669"/>
    <property type="project" value="UniProtKB-KW"/>
</dbReference>
<dbReference type="GO" id="GO:0016705">
    <property type="term" value="F:oxidoreductase activity, acting on paired donors, with incorporation or reduction of molecular oxygen"/>
    <property type="evidence" value="ECO:0007669"/>
    <property type="project" value="InterPro"/>
</dbReference>
<dbReference type="Gene3D" id="1.10.630.10">
    <property type="entry name" value="Cytochrome P450"/>
    <property type="match status" value="1"/>
</dbReference>
<dbReference type="InterPro" id="IPR001128">
    <property type="entry name" value="Cyt_P450"/>
</dbReference>
<dbReference type="InterPro" id="IPR017972">
    <property type="entry name" value="Cyt_P450_CS"/>
</dbReference>
<dbReference type="InterPro" id="IPR047146">
    <property type="entry name" value="Cyt_P450_E_CYP52_fungi"/>
</dbReference>
<dbReference type="InterPro" id="IPR002401">
    <property type="entry name" value="Cyt_P450_E_grp-I"/>
</dbReference>
<dbReference type="InterPro" id="IPR036396">
    <property type="entry name" value="Cyt_P450_sf"/>
</dbReference>
<dbReference type="PANTHER" id="PTHR24287">
    <property type="entry name" value="P450, PUTATIVE (EUROFUNG)-RELATED"/>
    <property type="match status" value="1"/>
</dbReference>
<dbReference type="PANTHER" id="PTHR24287:SF5">
    <property type="entry name" value="P450, PUTATIVE (EUROFUNG)-RELATED"/>
    <property type="match status" value="1"/>
</dbReference>
<dbReference type="Pfam" id="PF00067">
    <property type="entry name" value="p450"/>
    <property type="match status" value="1"/>
</dbReference>
<dbReference type="PRINTS" id="PR00463">
    <property type="entry name" value="EP450I"/>
</dbReference>
<dbReference type="PRINTS" id="PR00385">
    <property type="entry name" value="P450"/>
</dbReference>
<dbReference type="SUPFAM" id="SSF48264">
    <property type="entry name" value="Cytochrome P450"/>
    <property type="match status" value="1"/>
</dbReference>
<dbReference type="PROSITE" id="PS00086">
    <property type="entry name" value="CYTOCHROME_P450"/>
    <property type="match status" value="1"/>
</dbReference>